<feature type="chain" id="PRO_1000007866" description="4-diphosphocytidyl-2-C-methyl-D-erythritol kinase">
    <location>
        <begin position="1"/>
        <end position="271"/>
    </location>
</feature>
<feature type="active site" evidence="1">
    <location>
        <position position="8"/>
    </location>
</feature>
<feature type="active site" evidence="1">
    <location>
        <position position="132"/>
    </location>
</feature>
<feature type="binding site" evidence="1">
    <location>
        <begin position="90"/>
        <end position="100"/>
    </location>
    <ligand>
        <name>ATP</name>
        <dbReference type="ChEBI" id="CHEBI:30616"/>
    </ligand>
</feature>
<accession>A6L9X1</accession>
<reference key="1">
    <citation type="journal article" date="2007" name="PLoS Biol.">
        <title>Evolution of symbiotic bacteria in the distal human intestine.</title>
        <authorList>
            <person name="Xu J."/>
            <person name="Mahowald M.A."/>
            <person name="Ley R.E."/>
            <person name="Lozupone C.A."/>
            <person name="Hamady M."/>
            <person name="Martens E.C."/>
            <person name="Henrissat B."/>
            <person name="Coutinho P.M."/>
            <person name="Minx P."/>
            <person name="Latreille P."/>
            <person name="Cordum H."/>
            <person name="Van Brunt A."/>
            <person name="Kim K."/>
            <person name="Fulton R.S."/>
            <person name="Fulton L.A."/>
            <person name="Clifton S.W."/>
            <person name="Wilson R.K."/>
            <person name="Knight R.D."/>
            <person name="Gordon J.I."/>
        </authorList>
    </citation>
    <scope>NUCLEOTIDE SEQUENCE [LARGE SCALE GENOMIC DNA]</scope>
    <source>
        <strain>ATCC 8503 / DSM 20701 / CIP 104284 / JCM 5825 / NCTC 11152</strain>
    </source>
</reference>
<comment type="function">
    <text evidence="1">Catalyzes the phosphorylation of the position 2 hydroxy group of 4-diphosphocytidyl-2C-methyl-D-erythritol.</text>
</comment>
<comment type="catalytic activity">
    <reaction evidence="1">
        <text>4-CDP-2-C-methyl-D-erythritol + ATP = 4-CDP-2-C-methyl-D-erythritol 2-phosphate + ADP + H(+)</text>
        <dbReference type="Rhea" id="RHEA:18437"/>
        <dbReference type="ChEBI" id="CHEBI:15378"/>
        <dbReference type="ChEBI" id="CHEBI:30616"/>
        <dbReference type="ChEBI" id="CHEBI:57823"/>
        <dbReference type="ChEBI" id="CHEBI:57919"/>
        <dbReference type="ChEBI" id="CHEBI:456216"/>
        <dbReference type="EC" id="2.7.1.148"/>
    </reaction>
</comment>
<comment type="pathway">
    <text evidence="1">Isoprenoid biosynthesis; isopentenyl diphosphate biosynthesis via DXP pathway; isopentenyl diphosphate from 1-deoxy-D-xylulose 5-phosphate: step 3/6.</text>
</comment>
<comment type="similarity">
    <text evidence="1">Belongs to the GHMP kinase family. IspE subfamily.</text>
</comment>
<proteinExistence type="inferred from homology"/>
<keyword id="KW-0067">ATP-binding</keyword>
<keyword id="KW-0414">Isoprene biosynthesis</keyword>
<keyword id="KW-0418">Kinase</keyword>
<keyword id="KW-0547">Nucleotide-binding</keyword>
<keyword id="KW-1185">Reference proteome</keyword>
<keyword id="KW-0808">Transferase</keyword>
<organism>
    <name type="scientific">Parabacteroides distasonis (strain ATCC 8503 / DSM 20701 / CIP 104284 / JCM 5825 / NCTC 11152)</name>
    <dbReference type="NCBI Taxonomy" id="435591"/>
    <lineage>
        <taxon>Bacteria</taxon>
        <taxon>Pseudomonadati</taxon>
        <taxon>Bacteroidota</taxon>
        <taxon>Bacteroidia</taxon>
        <taxon>Bacteroidales</taxon>
        <taxon>Tannerellaceae</taxon>
        <taxon>Parabacteroides</taxon>
    </lineage>
</organism>
<name>ISPE_PARD8</name>
<gene>
    <name evidence="1" type="primary">ispE</name>
    <name type="ordered locus">BDI_0715</name>
</gene>
<evidence type="ECO:0000255" key="1">
    <source>
        <dbReference type="HAMAP-Rule" id="MF_00061"/>
    </source>
</evidence>
<sequence length="271" mass="29878">MICFPNAKINLGLNVVSKRPDGYHNIETIFYPIPVRDALEIVASDRTCFTQTGIPVDAPQEKNLVIKALNALKTRYEIPPLEIHLLKAIPFGAGLGGGSADAAFMLKLVNDFCGLDIHPDELEAIASTIGADCPFFIRNTPVFATGTGNQFEPVDLSLKDYYLCLVKPDVAVSTPEAYSMVTPAAPETSLKEIIRLPVSEWKERMVNDFERSVFPRHPVIERIKDTLYEGGALYAAMSGSGSSVFGLFEKPTHFKEQSLFSDCFLWEGQLS</sequence>
<protein>
    <recommendedName>
        <fullName evidence="1">4-diphosphocytidyl-2-C-methyl-D-erythritol kinase</fullName>
        <shortName evidence="1">CMK</shortName>
        <ecNumber evidence="1">2.7.1.148</ecNumber>
    </recommendedName>
    <alternativeName>
        <fullName evidence="1">4-(cytidine-5'-diphospho)-2-C-methyl-D-erythritol kinase</fullName>
    </alternativeName>
</protein>
<dbReference type="EC" id="2.7.1.148" evidence="1"/>
<dbReference type="EMBL" id="CP000140">
    <property type="protein sequence ID" value="ABR42485.1"/>
    <property type="molecule type" value="Genomic_DNA"/>
</dbReference>
<dbReference type="RefSeq" id="WP_008779736.1">
    <property type="nucleotide sequence ID" value="NC_009615.1"/>
</dbReference>
<dbReference type="SMR" id="A6L9X1"/>
<dbReference type="STRING" id="435591.BDI_0715"/>
<dbReference type="PaxDb" id="435591-BDI_0715"/>
<dbReference type="KEGG" id="pdi:BDI_0715"/>
<dbReference type="eggNOG" id="COG1947">
    <property type="taxonomic scope" value="Bacteria"/>
</dbReference>
<dbReference type="HOGENOM" id="CLU_053057_1_1_10"/>
<dbReference type="BioCyc" id="PDIS435591:G1G5A-732-MONOMER"/>
<dbReference type="UniPathway" id="UPA00056">
    <property type="reaction ID" value="UER00094"/>
</dbReference>
<dbReference type="Proteomes" id="UP000000566">
    <property type="component" value="Chromosome"/>
</dbReference>
<dbReference type="GO" id="GO:0050515">
    <property type="term" value="F:4-(cytidine 5'-diphospho)-2-C-methyl-D-erythritol kinase activity"/>
    <property type="evidence" value="ECO:0007669"/>
    <property type="project" value="UniProtKB-UniRule"/>
</dbReference>
<dbReference type="GO" id="GO:0005524">
    <property type="term" value="F:ATP binding"/>
    <property type="evidence" value="ECO:0007669"/>
    <property type="project" value="UniProtKB-UniRule"/>
</dbReference>
<dbReference type="GO" id="GO:0019288">
    <property type="term" value="P:isopentenyl diphosphate biosynthetic process, methylerythritol 4-phosphate pathway"/>
    <property type="evidence" value="ECO:0007669"/>
    <property type="project" value="UniProtKB-UniRule"/>
</dbReference>
<dbReference type="GO" id="GO:0016114">
    <property type="term" value="P:terpenoid biosynthetic process"/>
    <property type="evidence" value="ECO:0007669"/>
    <property type="project" value="InterPro"/>
</dbReference>
<dbReference type="Gene3D" id="3.30.230.10">
    <property type="match status" value="1"/>
</dbReference>
<dbReference type="Gene3D" id="3.30.70.890">
    <property type="entry name" value="GHMP kinase, C-terminal domain"/>
    <property type="match status" value="1"/>
</dbReference>
<dbReference type="HAMAP" id="MF_00061">
    <property type="entry name" value="IspE"/>
    <property type="match status" value="1"/>
</dbReference>
<dbReference type="InterPro" id="IPR013750">
    <property type="entry name" value="GHMP_kinase_C_dom"/>
</dbReference>
<dbReference type="InterPro" id="IPR036554">
    <property type="entry name" value="GHMP_kinase_C_sf"/>
</dbReference>
<dbReference type="InterPro" id="IPR006204">
    <property type="entry name" value="GHMP_kinase_N_dom"/>
</dbReference>
<dbReference type="InterPro" id="IPR004424">
    <property type="entry name" value="IspE"/>
</dbReference>
<dbReference type="InterPro" id="IPR020568">
    <property type="entry name" value="Ribosomal_Su5_D2-typ_SF"/>
</dbReference>
<dbReference type="InterPro" id="IPR014721">
    <property type="entry name" value="Ribsml_uS5_D2-typ_fold_subgr"/>
</dbReference>
<dbReference type="NCBIfam" id="TIGR00154">
    <property type="entry name" value="ispE"/>
    <property type="match status" value="1"/>
</dbReference>
<dbReference type="PANTHER" id="PTHR43527">
    <property type="entry name" value="4-DIPHOSPHOCYTIDYL-2-C-METHYL-D-ERYTHRITOL KINASE, CHLOROPLASTIC"/>
    <property type="match status" value="1"/>
</dbReference>
<dbReference type="PANTHER" id="PTHR43527:SF2">
    <property type="entry name" value="4-DIPHOSPHOCYTIDYL-2-C-METHYL-D-ERYTHRITOL KINASE, CHLOROPLASTIC"/>
    <property type="match status" value="1"/>
</dbReference>
<dbReference type="Pfam" id="PF08544">
    <property type="entry name" value="GHMP_kinases_C"/>
    <property type="match status" value="1"/>
</dbReference>
<dbReference type="Pfam" id="PF00288">
    <property type="entry name" value="GHMP_kinases_N"/>
    <property type="match status" value="1"/>
</dbReference>
<dbReference type="PIRSF" id="PIRSF010376">
    <property type="entry name" value="IspE"/>
    <property type="match status" value="1"/>
</dbReference>
<dbReference type="SUPFAM" id="SSF55060">
    <property type="entry name" value="GHMP Kinase, C-terminal domain"/>
    <property type="match status" value="1"/>
</dbReference>
<dbReference type="SUPFAM" id="SSF54211">
    <property type="entry name" value="Ribosomal protein S5 domain 2-like"/>
    <property type="match status" value="1"/>
</dbReference>